<dbReference type="EMBL" id="AL590842">
    <property type="protein sequence ID" value="CAL21198.1"/>
    <property type="molecule type" value="Genomic_DNA"/>
</dbReference>
<dbReference type="EMBL" id="AE009952">
    <property type="protein sequence ID" value="AAM84721.1"/>
    <property type="molecule type" value="Genomic_DNA"/>
</dbReference>
<dbReference type="EMBL" id="AE017042">
    <property type="protein sequence ID" value="AAS61386.1"/>
    <property type="molecule type" value="Genomic_DNA"/>
</dbReference>
<dbReference type="PIR" id="AC0314">
    <property type="entry name" value="AC0314"/>
</dbReference>
<dbReference type="RefSeq" id="YP_002347532.1">
    <property type="nucleotide sequence ID" value="NC_003143.1"/>
</dbReference>
<dbReference type="SMR" id="Q8ZDJ2"/>
<dbReference type="IntAct" id="Q8ZDJ2">
    <property type="interactions" value="8"/>
</dbReference>
<dbReference type="STRING" id="214092.YPO2573"/>
<dbReference type="PaxDb" id="214092-YPO2573"/>
<dbReference type="DNASU" id="1146090"/>
<dbReference type="EnsemblBacteria" id="AAS61386">
    <property type="protein sequence ID" value="AAS61386"/>
    <property type="gene ID" value="YP_1141"/>
</dbReference>
<dbReference type="KEGG" id="ype:YPO2573"/>
<dbReference type="KEGG" id="ypk:y1143"/>
<dbReference type="KEGG" id="ypm:YP_1141"/>
<dbReference type="PATRIC" id="fig|214092.21.peg.2998"/>
<dbReference type="eggNOG" id="COG2373">
    <property type="taxonomic scope" value="Bacteria"/>
</dbReference>
<dbReference type="HOGENOM" id="CLU_000965_2_0_6"/>
<dbReference type="OrthoDB" id="9767116at2"/>
<dbReference type="Proteomes" id="UP000000815">
    <property type="component" value="Chromosome"/>
</dbReference>
<dbReference type="Proteomes" id="UP000001019">
    <property type="component" value="Chromosome"/>
</dbReference>
<dbReference type="Proteomes" id="UP000002490">
    <property type="component" value="Chromosome"/>
</dbReference>
<dbReference type="GO" id="GO:0004866">
    <property type="term" value="F:endopeptidase inhibitor activity"/>
    <property type="evidence" value="ECO:0000318"/>
    <property type="project" value="GO_Central"/>
</dbReference>
<dbReference type="CDD" id="cd02891">
    <property type="entry name" value="A2M_like"/>
    <property type="match status" value="1"/>
</dbReference>
<dbReference type="Gene3D" id="1.50.10.20">
    <property type="match status" value="1"/>
</dbReference>
<dbReference type="Gene3D" id="2.60.40.1930">
    <property type="match status" value="1"/>
</dbReference>
<dbReference type="Gene3D" id="2.60.40.3710">
    <property type="match status" value="1"/>
</dbReference>
<dbReference type="InterPro" id="IPR011625">
    <property type="entry name" value="A2M_N_BRD"/>
</dbReference>
<dbReference type="InterPro" id="IPR021868">
    <property type="entry name" value="Alpha_2_Macroglob_MG3"/>
</dbReference>
<dbReference type="InterPro" id="IPR041203">
    <property type="entry name" value="Bact_A2M_MG5"/>
</dbReference>
<dbReference type="InterPro" id="IPR041462">
    <property type="entry name" value="Bact_A2M_MG6"/>
</dbReference>
<dbReference type="InterPro" id="IPR041246">
    <property type="entry name" value="Bact_MG10"/>
</dbReference>
<dbReference type="InterPro" id="IPR001599">
    <property type="entry name" value="Macroglobln_a2"/>
</dbReference>
<dbReference type="InterPro" id="IPR002890">
    <property type="entry name" value="MG2"/>
</dbReference>
<dbReference type="InterPro" id="IPR008930">
    <property type="entry name" value="Terpenoid_cyclase/PrenylTrfase"/>
</dbReference>
<dbReference type="InterPro" id="IPR051802">
    <property type="entry name" value="YfhM-like"/>
</dbReference>
<dbReference type="PANTHER" id="PTHR40094">
    <property type="entry name" value="ALPHA-2-MACROGLOBULIN HOMOLOG"/>
    <property type="match status" value="1"/>
</dbReference>
<dbReference type="PANTHER" id="PTHR40094:SF1">
    <property type="entry name" value="UBIQUITIN DOMAIN-CONTAINING PROTEIN"/>
    <property type="match status" value="1"/>
</dbReference>
<dbReference type="Pfam" id="PF00207">
    <property type="entry name" value="A2M"/>
    <property type="match status" value="1"/>
</dbReference>
<dbReference type="Pfam" id="PF07703">
    <property type="entry name" value="A2M_BRD"/>
    <property type="match status" value="1"/>
</dbReference>
<dbReference type="Pfam" id="PF17973">
    <property type="entry name" value="bMG10"/>
    <property type="match status" value="1"/>
</dbReference>
<dbReference type="Pfam" id="PF11974">
    <property type="entry name" value="bMG3"/>
    <property type="match status" value="1"/>
</dbReference>
<dbReference type="Pfam" id="PF17972">
    <property type="entry name" value="bMG5"/>
    <property type="match status" value="1"/>
</dbReference>
<dbReference type="Pfam" id="PF17962">
    <property type="entry name" value="bMG6"/>
    <property type="match status" value="1"/>
</dbReference>
<dbReference type="Pfam" id="PF01835">
    <property type="entry name" value="MG2"/>
    <property type="match status" value="1"/>
</dbReference>
<dbReference type="SMART" id="SM01360">
    <property type="entry name" value="A2M"/>
    <property type="match status" value="1"/>
</dbReference>
<dbReference type="SMART" id="SM01359">
    <property type="entry name" value="A2M_N_2"/>
    <property type="match status" value="1"/>
</dbReference>
<dbReference type="SUPFAM" id="SSF48239">
    <property type="entry name" value="Terpenoid cyclases/Protein prenyltransferases"/>
    <property type="match status" value="1"/>
</dbReference>
<feature type="signal peptide" evidence="1">
    <location>
        <begin position="1"/>
        <end position="27"/>
    </location>
</feature>
<feature type="chain" id="PRO_0000036248" description="Alpha-2-macroglobulin homolog">
    <location>
        <begin position="28"/>
        <end position="2004"/>
    </location>
</feature>
<accession>Q8ZDJ2</accession>
<accession>Q0WDV6</accession>
<gene>
    <name type="ordered locus">YPO2573</name>
    <name type="ordered locus">y1143</name>
    <name type="ordered locus">YP_1141</name>
</gene>
<sequence length="2004" mass="224131">MLCCLVFKGLLSMDLLRFLLISPFALIKGLYRLSAYLLRLVGRLLRPVVGNLNWRAPQWMTKTANGLHCAFNRSEQWVAKHPKGISAAIVLLMAAASAAFYGYHWYLNRPQPIEPAPMVYQETSIRVSAPRTVNYQAQKPEAQPLSLNFMHSAAPITAMGQVVDQGISLTPAIEGEWKWATERTLVFTPKKAWPMGANYQITIDTEKLLAPQIKLNQTELNFTTPAFAYQLEKAEYYQDPQEAQKRSTIFHVQFNAPVDVASFEKQILLGLVEGKSKSEKKLNFSVVYDEKKLNAWIHSQPLMPMDKGGSVHLSINKGVNASVAATPTTQAQNKWVSVPNLYSLAVNSINATLVESDNNNGERALIIAISDAVKDKEIKNAVKAWLLPQHNFQAKESAKTSTDFYPWDMDDIDDNLLQQSTPLALTLNEAEQEYQPIFSFKFDAPSYRTLLIEVNNSLTSVGGYKMPEKIYQIVRVPDYPKTLRFMSQGSLLSMQGDKQISVAARNMTGMKLDIKRVIPSQLQHIVSFKSSEYSSAHFNRLSDEYFTEHFQYQTALNNDNPGEINYQGVDLSRYLANNPSARRGVFLLTLSAWDPEKRDNQQHSEEDYDEDQEWVGDSRFVVITDLGIITKQSQDRSRDVFVQSIHSGLPAADAKVSVVAKNGVVLLSQITDSKGHVHFPALDAFKNERQPVMFLVEKEGDVSFLPTRATYDRNLDFSRFDIDGEETPSDPRTLSSYLFSDRGVYRPGDRFNIGLITRTANWATALDGVPLRAEIRDPRDTLMSTLPITLDSSGFNELSYTTGENSPTGEWNVYLYLVGKNNETSMLLGHTTVNVKEFEPDRLKVQLQLTPERQQGWVKPQELQANINVQNLFGTPAQERRVTSRLILRPMYPSFAPFPDYLFYENRHNSDGFETELEEQTTDLQGMATIPLDLKSYADATYQLQLLSEAFEAGGGRSVAATARVLVSPYDSLVGVKADGDLSYINRDAVRKLNIIAVDPSLNKIALPDLSLSLIEQKYISVLTKQDSGVYKYQSRLKEQLVSEQPLQISPTGTDFTLVTQQPGDFILVVKDSQGQVLNRISYTVAGNANLTRSLDRNTELKLKLNQAEYLQGEEIEIAINAPYAGSGLITIEKDKVYSWQWFHSDTTSSVQRIRIPPAMEGNGYINVQFVRDVNSDEIFMSPLSYGVMPFKISTKARQAAIELASPSVIKPGEVLPIKVTTDSPQRVVVFAVDEGILQVARYRLKDPLDYFFRKRELSVQSAQILDLILPEFSKLMALTSAPGGDAGEGLDLHLNPFKRKQDKPVAYWSGITEVNGETTFNYPIPDYFNGKIRVMAISATPDRIGKVQTSTTVRDNFILTPNVPAMVAPGDEFDVTVGVSNNLQGLKGKAVDITVRLTPPPQLEVVGEAQHSLSLAEKRETLVSFRLRARSALGDAPLVFDASYGSQSSRRTVSTSVRPAMPFRTQSVMGRMEGNKHTVTNLRQMFDNYAQRQATASHSPLVLTQGLARYLADYPYYSSEQIVSRSIPLIMQSKHPEMDSALNQNEVRDQLKNMLRILSSRQNSTGAIGLWHASPTPDPFVTPYVVQFLLEAKSAGYSLPNDILEGANNALRLLAARPYDDLYSLRLRAFAVYLLTLQGEITTNTLASVQSTLQQLYPDSWQTDLSAIYLASSYRLLKMDDEANKLLQPTWKQLGKAYSKAWWTQNYFDPLVQDATRLYLITRHFPEKVSSIPPQALENMVLALRDEHYTTYSSAMSILALESYTSQVAAQQDTPETLQIIEISKSKGIDPNVISTLNGLFVQGDFTGEAKAIQFNNYASAPAWYVVNQSGYDLQPPKDAISNGLEISRSYTDEQGKPVTQVTLGQKVNVHLKIRANAKQGQNNLAIVDLLPGGFEVVQQTAPEPEFYDNQDDQDEETGSGWQSPLMVSGSSWYPDYSDIREDRVIIYGSASTDVKEFIYQIKSTNTGRFVVPPAYGEAMYDRNVQALSVGKGHILVVPPEAK</sequence>
<organism>
    <name type="scientific">Yersinia pestis</name>
    <dbReference type="NCBI Taxonomy" id="632"/>
    <lineage>
        <taxon>Bacteria</taxon>
        <taxon>Pseudomonadati</taxon>
        <taxon>Pseudomonadota</taxon>
        <taxon>Gammaproteobacteria</taxon>
        <taxon>Enterobacterales</taxon>
        <taxon>Yersiniaceae</taxon>
        <taxon>Yersinia</taxon>
    </lineage>
</organism>
<reference key="1">
    <citation type="journal article" date="2001" name="Nature">
        <title>Genome sequence of Yersinia pestis, the causative agent of plague.</title>
        <authorList>
            <person name="Parkhill J."/>
            <person name="Wren B.W."/>
            <person name="Thomson N.R."/>
            <person name="Titball R.W."/>
            <person name="Holden M.T.G."/>
            <person name="Prentice M.B."/>
            <person name="Sebaihia M."/>
            <person name="James K.D."/>
            <person name="Churcher C.M."/>
            <person name="Mungall K.L."/>
            <person name="Baker S."/>
            <person name="Basham D."/>
            <person name="Bentley S.D."/>
            <person name="Brooks K."/>
            <person name="Cerdeno-Tarraga A.-M."/>
            <person name="Chillingworth T."/>
            <person name="Cronin A."/>
            <person name="Davies R.M."/>
            <person name="Davis P."/>
            <person name="Dougan G."/>
            <person name="Feltwell T."/>
            <person name="Hamlin N."/>
            <person name="Holroyd S."/>
            <person name="Jagels K."/>
            <person name="Karlyshev A.V."/>
            <person name="Leather S."/>
            <person name="Moule S."/>
            <person name="Oyston P.C.F."/>
            <person name="Quail M.A."/>
            <person name="Rutherford K.M."/>
            <person name="Simmonds M."/>
            <person name="Skelton J."/>
            <person name="Stevens K."/>
            <person name="Whitehead S."/>
            <person name="Barrell B.G."/>
        </authorList>
    </citation>
    <scope>NUCLEOTIDE SEQUENCE [LARGE SCALE GENOMIC DNA]</scope>
    <source>
        <strain>CO-92 / Biovar Orientalis</strain>
    </source>
</reference>
<reference key="2">
    <citation type="journal article" date="2002" name="J. Bacteriol.">
        <title>Genome sequence of Yersinia pestis KIM.</title>
        <authorList>
            <person name="Deng W."/>
            <person name="Burland V."/>
            <person name="Plunkett G. III"/>
            <person name="Boutin A."/>
            <person name="Mayhew G.F."/>
            <person name="Liss P."/>
            <person name="Perna N.T."/>
            <person name="Rose D.J."/>
            <person name="Mau B."/>
            <person name="Zhou S."/>
            <person name="Schwartz D.C."/>
            <person name="Fetherston J.D."/>
            <person name="Lindler L.E."/>
            <person name="Brubaker R.R."/>
            <person name="Plano G.V."/>
            <person name="Straley S.C."/>
            <person name="McDonough K.A."/>
            <person name="Nilles M.L."/>
            <person name="Matson J.S."/>
            <person name="Blattner F.R."/>
            <person name="Perry R.D."/>
        </authorList>
    </citation>
    <scope>NUCLEOTIDE SEQUENCE [LARGE SCALE GENOMIC DNA]</scope>
    <source>
        <strain>KIM10+ / Biovar Mediaevalis</strain>
    </source>
</reference>
<reference key="3">
    <citation type="journal article" date="2004" name="DNA Res.">
        <title>Complete genome sequence of Yersinia pestis strain 91001, an isolate avirulent to humans.</title>
        <authorList>
            <person name="Song Y."/>
            <person name="Tong Z."/>
            <person name="Wang J."/>
            <person name="Wang L."/>
            <person name="Guo Z."/>
            <person name="Han Y."/>
            <person name="Zhang J."/>
            <person name="Pei D."/>
            <person name="Zhou D."/>
            <person name="Qin H."/>
            <person name="Pang X."/>
            <person name="Han Y."/>
            <person name="Zhai J."/>
            <person name="Li M."/>
            <person name="Cui B."/>
            <person name="Qi Z."/>
            <person name="Jin L."/>
            <person name="Dai R."/>
            <person name="Chen F."/>
            <person name="Li S."/>
            <person name="Ye C."/>
            <person name="Du Z."/>
            <person name="Lin W."/>
            <person name="Wang J."/>
            <person name="Yu J."/>
            <person name="Yang H."/>
            <person name="Wang J."/>
            <person name="Huang P."/>
            <person name="Yang R."/>
        </authorList>
    </citation>
    <scope>NUCLEOTIDE SEQUENCE [LARGE SCALE GENOMIC DNA]</scope>
    <source>
        <strain>91001 / Biovar Mediaevalis</strain>
    </source>
</reference>
<keyword id="KW-1185">Reference proteome</keyword>
<keyword id="KW-0732">Signal</keyword>
<proteinExistence type="inferred from homology"/>
<comment type="similarity">
    <text evidence="2">Belongs to the protease inhibitor I39 (alpha-2-macroglobulin) family. Bacterial alpha-2-macroglobulin subfamily.</text>
</comment>
<comment type="caution">
    <text evidence="2">Lacks the conserved thioester bond that is characteristic of the alpha-2-macroglobulins.</text>
</comment>
<name>A2MGH_YERPE</name>
<protein>
    <recommendedName>
        <fullName evidence="2">Alpha-2-macroglobulin homolog</fullName>
    </recommendedName>
</protein>
<evidence type="ECO:0000255" key="1"/>
<evidence type="ECO:0000305" key="2"/>